<proteinExistence type="inferred from homology"/>
<dbReference type="EC" id="4.3.2.1" evidence="1"/>
<dbReference type="EMBL" id="CP001164">
    <property type="protein sequence ID" value="ACI38374.1"/>
    <property type="molecule type" value="Genomic_DNA"/>
</dbReference>
<dbReference type="RefSeq" id="WP_001230094.1">
    <property type="nucleotide sequence ID" value="NC_011353.1"/>
</dbReference>
<dbReference type="SMR" id="B5Z062"/>
<dbReference type="KEGG" id="ecf:ECH74115_5420"/>
<dbReference type="HOGENOM" id="CLU_027272_2_3_6"/>
<dbReference type="UniPathway" id="UPA00068">
    <property type="reaction ID" value="UER00114"/>
</dbReference>
<dbReference type="GO" id="GO:0005829">
    <property type="term" value="C:cytosol"/>
    <property type="evidence" value="ECO:0007669"/>
    <property type="project" value="TreeGrafter"/>
</dbReference>
<dbReference type="GO" id="GO:0004056">
    <property type="term" value="F:argininosuccinate lyase activity"/>
    <property type="evidence" value="ECO:0007669"/>
    <property type="project" value="UniProtKB-UniRule"/>
</dbReference>
<dbReference type="GO" id="GO:0042450">
    <property type="term" value="P:arginine biosynthetic process via ornithine"/>
    <property type="evidence" value="ECO:0007669"/>
    <property type="project" value="InterPro"/>
</dbReference>
<dbReference type="GO" id="GO:0006526">
    <property type="term" value="P:L-arginine biosynthetic process"/>
    <property type="evidence" value="ECO:0007669"/>
    <property type="project" value="UniProtKB-UniRule"/>
</dbReference>
<dbReference type="CDD" id="cd01359">
    <property type="entry name" value="Argininosuccinate_lyase"/>
    <property type="match status" value="1"/>
</dbReference>
<dbReference type="FunFam" id="1.10.275.10:FF:000004">
    <property type="entry name" value="Argininosuccinate lyase"/>
    <property type="match status" value="1"/>
</dbReference>
<dbReference type="FunFam" id="1.10.40.30:FF:000001">
    <property type="entry name" value="Argininosuccinate lyase"/>
    <property type="match status" value="1"/>
</dbReference>
<dbReference type="FunFam" id="1.20.200.10:FF:000006">
    <property type="entry name" value="Argininosuccinate lyase"/>
    <property type="match status" value="1"/>
</dbReference>
<dbReference type="Gene3D" id="1.10.40.30">
    <property type="entry name" value="Fumarase/aspartase (C-terminal domain)"/>
    <property type="match status" value="1"/>
</dbReference>
<dbReference type="Gene3D" id="1.20.200.10">
    <property type="entry name" value="Fumarase/aspartase (Central domain)"/>
    <property type="match status" value="1"/>
</dbReference>
<dbReference type="Gene3D" id="1.10.275.10">
    <property type="entry name" value="Fumarase/aspartase (N-terminal domain)"/>
    <property type="match status" value="1"/>
</dbReference>
<dbReference type="HAMAP" id="MF_00006">
    <property type="entry name" value="Arg_succ_lyase"/>
    <property type="match status" value="1"/>
</dbReference>
<dbReference type="InterPro" id="IPR029419">
    <property type="entry name" value="Arg_succ_lyase_C"/>
</dbReference>
<dbReference type="InterPro" id="IPR009049">
    <property type="entry name" value="Argininosuccinate_lyase"/>
</dbReference>
<dbReference type="InterPro" id="IPR024083">
    <property type="entry name" value="Fumarase/histidase_N"/>
</dbReference>
<dbReference type="InterPro" id="IPR020557">
    <property type="entry name" value="Fumarate_lyase_CS"/>
</dbReference>
<dbReference type="InterPro" id="IPR000362">
    <property type="entry name" value="Fumarate_lyase_fam"/>
</dbReference>
<dbReference type="InterPro" id="IPR022761">
    <property type="entry name" value="Fumarate_lyase_N"/>
</dbReference>
<dbReference type="InterPro" id="IPR008948">
    <property type="entry name" value="L-Aspartase-like"/>
</dbReference>
<dbReference type="NCBIfam" id="TIGR00838">
    <property type="entry name" value="argH"/>
    <property type="match status" value="1"/>
</dbReference>
<dbReference type="NCBIfam" id="NF008964">
    <property type="entry name" value="PRK12308.1"/>
    <property type="match status" value="1"/>
</dbReference>
<dbReference type="PANTHER" id="PTHR43814">
    <property type="entry name" value="ARGININOSUCCINATE LYASE"/>
    <property type="match status" value="1"/>
</dbReference>
<dbReference type="PANTHER" id="PTHR43814:SF1">
    <property type="entry name" value="ARGININOSUCCINATE LYASE"/>
    <property type="match status" value="1"/>
</dbReference>
<dbReference type="Pfam" id="PF14698">
    <property type="entry name" value="ASL_C2"/>
    <property type="match status" value="1"/>
</dbReference>
<dbReference type="Pfam" id="PF00206">
    <property type="entry name" value="Lyase_1"/>
    <property type="match status" value="1"/>
</dbReference>
<dbReference type="PRINTS" id="PR00145">
    <property type="entry name" value="ARGSUCLYASE"/>
</dbReference>
<dbReference type="PRINTS" id="PR00149">
    <property type="entry name" value="FUMRATELYASE"/>
</dbReference>
<dbReference type="SUPFAM" id="SSF48557">
    <property type="entry name" value="L-aspartase-like"/>
    <property type="match status" value="1"/>
</dbReference>
<dbReference type="PROSITE" id="PS00163">
    <property type="entry name" value="FUMARATE_LYASES"/>
    <property type="match status" value="1"/>
</dbReference>
<keyword id="KW-0028">Amino-acid biosynthesis</keyword>
<keyword id="KW-0055">Arginine biosynthesis</keyword>
<keyword id="KW-0963">Cytoplasm</keyword>
<keyword id="KW-0456">Lyase</keyword>
<accession>B5Z062</accession>
<evidence type="ECO:0000255" key="1">
    <source>
        <dbReference type="HAMAP-Rule" id="MF_00006"/>
    </source>
</evidence>
<protein>
    <recommendedName>
        <fullName evidence="1">Argininosuccinate lyase</fullName>
        <shortName evidence="1">ASAL</shortName>
        <ecNumber evidence="1">4.3.2.1</ecNumber>
    </recommendedName>
    <alternativeName>
        <fullName evidence="1">Arginosuccinase</fullName>
    </alternativeName>
</protein>
<gene>
    <name evidence="1" type="primary">argH</name>
    <name type="ordered locus">ECH74115_5420</name>
</gene>
<feature type="chain" id="PRO_1000089079" description="Argininosuccinate lyase">
    <location>
        <begin position="1"/>
        <end position="457"/>
    </location>
</feature>
<comment type="catalytic activity">
    <reaction evidence="1">
        <text>2-(N(omega)-L-arginino)succinate = fumarate + L-arginine</text>
        <dbReference type="Rhea" id="RHEA:24020"/>
        <dbReference type="ChEBI" id="CHEBI:29806"/>
        <dbReference type="ChEBI" id="CHEBI:32682"/>
        <dbReference type="ChEBI" id="CHEBI:57472"/>
        <dbReference type="EC" id="4.3.2.1"/>
    </reaction>
</comment>
<comment type="pathway">
    <text evidence="1">Amino-acid biosynthesis; L-arginine biosynthesis; L-arginine from L-ornithine and carbamoyl phosphate: step 3/3.</text>
</comment>
<comment type="subcellular location">
    <subcellularLocation>
        <location evidence="1">Cytoplasm</location>
    </subcellularLocation>
</comment>
<comment type="similarity">
    <text evidence="1">Belongs to the lyase 1 family. Argininosuccinate lyase subfamily.</text>
</comment>
<reference key="1">
    <citation type="journal article" date="2011" name="Proc. Natl. Acad. Sci. U.S.A.">
        <title>Genomic anatomy of Escherichia coli O157:H7 outbreaks.</title>
        <authorList>
            <person name="Eppinger M."/>
            <person name="Mammel M.K."/>
            <person name="Leclerc J.E."/>
            <person name="Ravel J."/>
            <person name="Cebula T.A."/>
        </authorList>
    </citation>
    <scope>NUCLEOTIDE SEQUENCE [LARGE SCALE GENOMIC DNA]</scope>
    <source>
        <strain>EC4115 / EHEC</strain>
    </source>
</reference>
<organism>
    <name type="scientific">Escherichia coli O157:H7 (strain EC4115 / EHEC)</name>
    <dbReference type="NCBI Taxonomy" id="444450"/>
    <lineage>
        <taxon>Bacteria</taxon>
        <taxon>Pseudomonadati</taxon>
        <taxon>Pseudomonadota</taxon>
        <taxon>Gammaproteobacteria</taxon>
        <taxon>Enterobacterales</taxon>
        <taxon>Enterobacteriaceae</taxon>
        <taxon>Escherichia</taxon>
    </lineage>
</organism>
<sequence length="457" mass="50285">MALWGGRFTQAADQRFKQFNDSLRFDYRLAEQDIVGSVAWSKALVTVGVLTAEEQAQLEEALNVLLEDVRARPQQILESDAEDIHSWVEGKLIDKVGQLGKKLHTGRSRNDQVATDLKLWCKDTVSELLTANRQLQSALVETAQNNQDAVMPGYTHLQRAQPVTFAHWCLAYVEMLARDESRLQDALKRLDVSPLGCGALAGTAYEIDREQLAGWLGFASATRNSLDSVSDRDHVLELLSAAAIGMVHLSRFAEDLIFFNTGEAGFVELSDRVTSGSSLMPQKKNPDALELIRGKCGRVQGALTGMMMTLKGLPLAYNKDMQEDKEGLFDALDTWLDCLHMAALVLDGIQVKRPRCQEAAQQGYANATELADYLVAKGVPFREAHHIVGEAVVEAIRQGKPLEELPLTELQKFSPVIGEDVYPILSLQSCLDKRAAKGGVSPQQVAQAIAFARARLG</sequence>
<name>ARLY_ECO5E</name>